<sequence length="169" mass="18743">MYTSGYAHRSSSFSSAASKIARVSTENTTAGLISEVVYREDQPMMTQLLLLPLLQQLGQQSRWQLWLTPQQKLSREWVQASGLPLTKVMQISQLSPCHTVESMVRALRTGNYSVVIGWLADDLTAEEHAELVDAANEGNAMGFIMRPVSASSHATRQLSGLKIHSNLYH</sequence>
<gene>
    <name evidence="1" type="primary">sulA</name>
    <name type="ordered locus">c1095</name>
</gene>
<proteinExistence type="inferred from homology"/>
<dbReference type="EMBL" id="AE014075">
    <property type="protein sequence ID" value="AAN79563.1"/>
    <property type="status" value="ALT_INIT"/>
    <property type="molecule type" value="Genomic_DNA"/>
</dbReference>
<dbReference type="RefSeq" id="WP_000288707.1">
    <property type="nucleotide sequence ID" value="NZ_CP051263.1"/>
</dbReference>
<dbReference type="SMR" id="Q8FJ79"/>
<dbReference type="STRING" id="199310.c1095"/>
<dbReference type="KEGG" id="ecc:c1095"/>
<dbReference type="eggNOG" id="COG5404">
    <property type="taxonomic scope" value="Bacteria"/>
</dbReference>
<dbReference type="HOGENOM" id="CLU_118972_1_0_6"/>
<dbReference type="Proteomes" id="UP000001410">
    <property type="component" value="Chromosome"/>
</dbReference>
<dbReference type="GO" id="GO:0000917">
    <property type="term" value="P:division septum assembly"/>
    <property type="evidence" value="ECO:0007669"/>
    <property type="project" value="UniProtKB-KW"/>
</dbReference>
<dbReference type="GO" id="GO:0006281">
    <property type="term" value="P:DNA repair"/>
    <property type="evidence" value="ECO:0007669"/>
    <property type="project" value="TreeGrafter"/>
</dbReference>
<dbReference type="GO" id="GO:0051782">
    <property type="term" value="P:negative regulation of cell division"/>
    <property type="evidence" value="ECO:0007669"/>
    <property type="project" value="UniProtKB-UniRule"/>
</dbReference>
<dbReference type="GO" id="GO:0009432">
    <property type="term" value="P:SOS response"/>
    <property type="evidence" value="ECO:0007669"/>
    <property type="project" value="UniProtKB-UniRule"/>
</dbReference>
<dbReference type="FunFam" id="3.40.50.300:FF:000417">
    <property type="entry name" value="Cell division inhibitor SulA"/>
    <property type="match status" value="1"/>
</dbReference>
<dbReference type="Gene3D" id="3.40.50.300">
    <property type="entry name" value="P-loop containing nucleotide triphosphate hydrolases"/>
    <property type="match status" value="1"/>
</dbReference>
<dbReference type="HAMAP" id="MF_01179">
    <property type="entry name" value="SulA"/>
    <property type="match status" value="1"/>
</dbReference>
<dbReference type="InterPro" id="IPR004596">
    <property type="entry name" value="Cell_div_suppressor_SulA"/>
</dbReference>
<dbReference type="InterPro" id="IPR027417">
    <property type="entry name" value="P-loop_NTPase"/>
</dbReference>
<dbReference type="InterPro" id="IPR050356">
    <property type="entry name" value="SulA_CellDiv_inhibitor"/>
</dbReference>
<dbReference type="InterPro" id="IPR047696">
    <property type="entry name" value="SulA_enterobact"/>
</dbReference>
<dbReference type="NCBIfam" id="NF007892">
    <property type="entry name" value="PRK10595.1"/>
    <property type="match status" value="1"/>
</dbReference>
<dbReference type="NCBIfam" id="TIGR00623">
    <property type="entry name" value="SOS_SulA_coli"/>
    <property type="match status" value="1"/>
</dbReference>
<dbReference type="PANTHER" id="PTHR35369">
    <property type="entry name" value="BLR3025 PROTEIN-RELATED"/>
    <property type="match status" value="1"/>
</dbReference>
<dbReference type="PANTHER" id="PTHR35369:SF4">
    <property type="entry name" value="CELL DIVISION INHIBITOR SULA"/>
    <property type="match status" value="1"/>
</dbReference>
<dbReference type="Pfam" id="PF03846">
    <property type="entry name" value="SulA"/>
    <property type="match status" value="1"/>
</dbReference>
<dbReference type="PIRSF" id="PIRSF003093">
    <property type="entry name" value="SulA"/>
    <property type="match status" value="1"/>
</dbReference>
<dbReference type="SUPFAM" id="SSF52540">
    <property type="entry name" value="P-loop containing nucleoside triphosphate hydrolases"/>
    <property type="match status" value="1"/>
</dbReference>
<comment type="function">
    <text evidence="1">Component of the SOS system and an inhibitor of cell division. Accumulation of SulA causes rapid cessation of cell division and the appearance of long, non-septate filaments. In the presence of GTP, binds a polymerization-competent form of FtsZ in a 1:1 ratio, thus inhibiting FtsZ polymerization and therefore preventing it from participating in the assembly of the Z ring. This mechanism prevents the premature segregation of damaged DNA to daughter cells during cell division.</text>
</comment>
<comment type="subunit">
    <text evidence="1">Interacts with FtsZ.</text>
</comment>
<comment type="induction">
    <text evidence="1">By DNA damage, as part of the SOS response.</text>
</comment>
<comment type="PTM">
    <text evidence="1">Is rapidly cleaved and degraded by the Lon protease once DNA damage is repaired.</text>
</comment>
<comment type="similarity">
    <text evidence="1">Belongs to the SulA family.</text>
</comment>
<comment type="sequence caution" evidence="2">
    <conflict type="erroneous initiation">
        <sequence resource="EMBL-CDS" id="AAN79563"/>
    </conflict>
</comment>
<feature type="chain" id="PRO_0000343964" description="Cell division inhibitor SulA">
    <location>
        <begin position="1"/>
        <end position="169"/>
    </location>
</feature>
<feature type="region of interest" description="FtsZ binding" evidence="1">
    <location>
        <begin position="106"/>
        <end position="112"/>
    </location>
</feature>
<feature type="region of interest" description="Lon protease binding" evidence="1">
    <location>
        <begin position="162"/>
        <end position="169"/>
    </location>
</feature>
<feature type="site" description="Essential for degradation by Lon protease" evidence="1">
    <location>
        <position position="169"/>
    </location>
</feature>
<keyword id="KW-0131">Cell cycle</keyword>
<keyword id="KW-0132">Cell division</keyword>
<keyword id="KW-0227">DNA damage</keyword>
<keyword id="KW-1185">Reference proteome</keyword>
<keyword id="KW-0717">Septation</keyword>
<keyword id="KW-0742">SOS response</keyword>
<accession>Q8FJ79</accession>
<reference key="1">
    <citation type="journal article" date="2002" name="Proc. Natl. Acad. Sci. U.S.A.">
        <title>Extensive mosaic structure revealed by the complete genome sequence of uropathogenic Escherichia coli.</title>
        <authorList>
            <person name="Welch R.A."/>
            <person name="Burland V."/>
            <person name="Plunkett G. III"/>
            <person name="Redford P."/>
            <person name="Roesch P."/>
            <person name="Rasko D."/>
            <person name="Buckles E.L."/>
            <person name="Liou S.-R."/>
            <person name="Boutin A."/>
            <person name="Hackett J."/>
            <person name="Stroud D."/>
            <person name="Mayhew G.F."/>
            <person name="Rose D.J."/>
            <person name="Zhou S."/>
            <person name="Schwartz D.C."/>
            <person name="Perna N.T."/>
            <person name="Mobley H.L.T."/>
            <person name="Donnenberg M.S."/>
            <person name="Blattner F.R."/>
        </authorList>
    </citation>
    <scope>NUCLEOTIDE SEQUENCE [LARGE SCALE GENOMIC DNA]</scope>
    <source>
        <strain>CFT073 / ATCC 700928 / UPEC</strain>
    </source>
</reference>
<protein>
    <recommendedName>
        <fullName evidence="1">Cell division inhibitor SulA</fullName>
    </recommendedName>
</protein>
<organism>
    <name type="scientific">Escherichia coli O6:H1 (strain CFT073 / ATCC 700928 / UPEC)</name>
    <dbReference type="NCBI Taxonomy" id="199310"/>
    <lineage>
        <taxon>Bacteria</taxon>
        <taxon>Pseudomonadati</taxon>
        <taxon>Pseudomonadota</taxon>
        <taxon>Gammaproteobacteria</taxon>
        <taxon>Enterobacterales</taxon>
        <taxon>Enterobacteriaceae</taxon>
        <taxon>Escherichia</taxon>
    </lineage>
</organism>
<evidence type="ECO:0000255" key="1">
    <source>
        <dbReference type="HAMAP-Rule" id="MF_01179"/>
    </source>
</evidence>
<evidence type="ECO:0000305" key="2"/>
<name>SULA_ECOL6</name>